<proteinExistence type="inferred from homology"/>
<accession>B5BLL0</accession>
<keyword id="KW-0030">Aminoacyl-tRNA synthetase</keyword>
<keyword id="KW-0067">ATP-binding</keyword>
<keyword id="KW-0963">Cytoplasm</keyword>
<keyword id="KW-0436">Ligase</keyword>
<keyword id="KW-0479">Metal-binding</keyword>
<keyword id="KW-0547">Nucleotide-binding</keyword>
<keyword id="KW-0648">Protein biosynthesis</keyword>
<keyword id="KW-0862">Zinc</keyword>
<sequence length="944" mass="105672">MSDYKSTLNLPETGFPMRGDLAKREPGMLARWTDDDLYGIIRAAKKGKKTFILHDGPPYANGSIHIGHSVNKILKDIIVKSKGLSGFDSPYVPGWDCHGLPIELKVEQEFGKPGEKFTAAEFRAKCREYAATQVDGQRKDFIRLGVLGDWSHPYLTMDFKTEANIIRALGRIIKNGHLHKGAKPVHWCVDCRSALAEAEVEYYDKTSPSIDVAFRAVDQDAVKAKFGLPGVSGPVSLVIWTTTPWTLPANRAISLAPDFDYALVQIDGQAVILAKDLVESVMQRIGAAEYTILGTVKGAELELLRFTHPFMGFDVPAILGDHVTLDAGTGAVHTAPGHGPDDYVIGQKYGLETANPVGPDGAYLPGTYPTLDGVNVFKANDIVIELLKEKGALLHVEKMQHSYPCCWRHKTPIIFRATPQWFVSMDKEGLRQQSLKEIKGVQWIPDWGQARIESMVANRPDWCISRQRTWGVPMSLFVHKETQELLPIERTLAAMEEVAKRVEVDGIQAWWDLDPKEILGEDADQYEKVPDTLDVWFDSGSTSYSVVDARPEFAGHAADMYLEGSDQHRGWFMSSLMISVAMKGKAPYRQVLTHGFTVDGQGRKMSKSIGNTVSPQDVMNKLGADILRLWVASTDYTGEMAVSDEILKRAADSYRRIRNTARFLLANLNGFNPATDMVKPEEMVVLDRWAVGCAKTAQQEILKAYEAYDFHEVVQRLMRFCSVEMGSFYLDIIKDRQYTAKADSVARRSCQTALYHIAEALVRWMAPIMSFTADEIWGYLLGEREKYVFTGEWYDGLFGLEENEEFNDAFWDDVRYIKDQINKELENQKANGIKSNLEAKVTLKYADDANGTIKKLKLLGEEVRFIFITSQFVISEQAGGIDDENIQYNAGNTTVQAVVTRAEGDKCPRCWHYTTDVGKVAEHADICGRCVSNIAGNGEQRKFA</sequence>
<comment type="function">
    <text evidence="1">Catalyzes the attachment of isoleucine to tRNA(Ile). As IleRS can inadvertently accommodate and process structurally similar amino acids such as valine, to avoid such errors it has two additional distinct tRNA(Ile)-dependent editing activities. One activity is designated as 'pretransfer' editing and involves the hydrolysis of activated Val-AMP. The other activity is designated 'posttransfer' editing and involves deacylation of mischarged Val-tRNA(Ile).</text>
</comment>
<comment type="catalytic activity">
    <reaction evidence="1">
        <text>tRNA(Ile) + L-isoleucine + ATP = L-isoleucyl-tRNA(Ile) + AMP + diphosphate</text>
        <dbReference type="Rhea" id="RHEA:11060"/>
        <dbReference type="Rhea" id="RHEA-COMP:9666"/>
        <dbReference type="Rhea" id="RHEA-COMP:9695"/>
        <dbReference type="ChEBI" id="CHEBI:30616"/>
        <dbReference type="ChEBI" id="CHEBI:33019"/>
        <dbReference type="ChEBI" id="CHEBI:58045"/>
        <dbReference type="ChEBI" id="CHEBI:78442"/>
        <dbReference type="ChEBI" id="CHEBI:78528"/>
        <dbReference type="ChEBI" id="CHEBI:456215"/>
        <dbReference type="EC" id="6.1.1.5"/>
    </reaction>
</comment>
<comment type="cofactor">
    <cofactor evidence="1">
        <name>Zn(2+)</name>
        <dbReference type="ChEBI" id="CHEBI:29105"/>
    </cofactor>
    <text evidence="1">Binds 1 zinc ion per subunit.</text>
</comment>
<comment type="subunit">
    <text evidence="1">Monomer.</text>
</comment>
<comment type="subcellular location">
    <subcellularLocation>
        <location evidence="1">Cytoplasm</location>
    </subcellularLocation>
</comment>
<comment type="domain">
    <text evidence="1">IleRS has two distinct active sites: one for aminoacylation and one for editing. The misactivated valine is translocated from the active site to the editing site, which sterically excludes the correctly activated isoleucine. The single editing site contains two valyl binding pockets, one specific for each substrate (Val-AMP or Val-tRNA(Ile)).</text>
</comment>
<comment type="similarity">
    <text evidence="1">Belongs to the class-I aminoacyl-tRNA synthetase family. IleS type 1 subfamily.</text>
</comment>
<reference key="1">
    <citation type="journal article" date="2009" name="BMC Genomics">
        <title>Pseudogene accumulation in the evolutionary histories of Salmonella enterica serovars Paratyphi A and Typhi.</title>
        <authorList>
            <person name="Holt K.E."/>
            <person name="Thomson N.R."/>
            <person name="Wain J."/>
            <person name="Langridge G.C."/>
            <person name="Hasan R."/>
            <person name="Bhutta Z.A."/>
            <person name="Quail M.A."/>
            <person name="Norbertczak H."/>
            <person name="Walker D."/>
            <person name="Simmonds M."/>
            <person name="White B."/>
            <person name="Bason N."/>
            <person name="Mungall K."/>
            <person name="Dougan G."/>
            <person name="Parkhill J."/>
        </authorList>
    </citation>
    <scope>NUCLEOTIDE SEQUENCE [LARGE SCALE GENOMIC DNA]</scope>
    <source>
        <strain>AKU_12601</strain>
    </source>
</reference>
<name>SYI_SALPK</name>
<evidence type="ECO:0000255" key="1">
    <source>
        <dbReference type="HAMAP-Rule" id="MF_02002"/>
    </source>
</evidence>
<organism>
    <name type="scientific">Salmonella paratyphi A (strain AKU_12601)</name>
    <dbReference type="NCBI Taxonomy" id="554290"/>
    <lineage>
        <taxon>Bacteria</taxon>
        <taxon>Pseudomonadati</taxon>
        <taxon>Pseudomonadota</taxon>
        <taxon>Gammaproteobacteria</taxon>
        <taxon>Enterobacterales</taxon>
        <taxon>Enterobacteriaceae</taxon>
        <taxon>Salmonella</taxon>
    </lineage>
</organism>
<feature type="chain" id="PRO_1000189193" description="Isoleucine--tRNA ligase">
    <location>
        <begin position="1"/>
        <end position="944"/>
    </location>
</feature>
<feature type="short sequence motif" description="'HIGH' region">
    <location>
        <begin position="58"/>
        <end position="68"/>
    </location>
</feature>
<feature type="short sequence motif" description="'KMSKS' region">
    <location>
        <begin position="604"/>
        <end position="608"/>
    </location>
</feature>
<feature type="binding site" evidence="1">
    <location>
        <position position="563"/>
    </location>
    <ligand>
        <name>L-isoleucyl-5'-AMP</name>
        <dbReference type="ChEBI" id="CHEBI:178002"/>
    </ligand>
</feature>
<feature type="binding site" evidence="1">
    <location>
        <position position="607"/>
    </location>
    <ligand>
        <name>ATP</name>
        <dbReference type="ChEBI" id="CHEBI:30616"/>
    </ligand>
</feature>
<feature type="binding site" evidence="1">
    <location>
        <position position="907"/>
    </location>
    <ligand>
        <name>Zn(2+)</name>
        <dbReference type="ChEBI" id="CHEBI:29105"/>
    </ligand>
</feature>
<feature type="binding site" evidence="1">
    <location>
        <position position="910"/>
    </location>
    <ligand>
        <name>Zn(2+)</name>
        <dbReference type="ChEBI" id="CHEBI:29105"/>
    </ligand>
</feature>
<feature type="binding site" evidence="1">
    <location>
        <position position="927"/>
    </location>
    <ligand>
        <name>Zn(2+)</name>
        <dbReference type="ChEBI" id="CHEBI:29105"/>
    </ligand>
</feature>
<feature type="binding site" evidence="1">
    <location>
        <position position="930"/>
    </location>
    <ligand>
        <name>Zn(2+)</name>
        <dbReference type="ChEBI" id="CHEBI:29105"/>
    </ligand>
</feature>
<dbReference type="EC" id="6.1.1.5" evidence="1"/>
<dbReference type="EMBL" id="FM200053">
    <property type="protein sequence ID" value="CAR58154.1"/>
    <property type="molecule type" value="Genomic_DNA"/>
</dbReference>
<dbReference type="RefSeq" id="WP_011232964.1">
    <property type="nucleotide sequence ID" value="NC_011147.1"/>
</dbReference>
<dbReference type="SMR" id="B5BLL0"/>
<dbReference type="KEGG" id="sek:SSPA0043"/>
<dbReference type="HOGENOM" id="CLU_001493_7_1_6"/>
<dbReference type="Proteomes" id="UP000001869">
    <property type="component" value="Chromosome"/>
</dbReference>
<dbReference type="GO" id="GO:0005829">
    <property type="term" value="C:cytosol"/>
    <property type="evidence" value="ECO:0007669"/>
    <property type="project" value="TreeGrafter"/>
</dbReference>
<dbReference type="GO" id="GO:0002161">
    <property type="term" value="F:aminoacyl-tRNA deacylase activity"/>
    <property type="evidence" value="ECO:0007669"/>
    <property type="project" value="InterPro"/>
</dbReference>
<dbReference type="GO" id="GO:0005524">
    <property type="term" value="F:ATP binding"/>
    <property type="evidence" value="ECO:0007669"/>
    <property type="project" value="UniProtKB-UniRule"/>
</dbReference>
<dbReference type="GO" id="GO:0004822">
    <property type="term" value="F:isoleucine-tRNA ligase activity"/>
    <property type="evidence" value="ECO:0007669"/>
    <property type="project" value="UniProtKB-UniRule"/>
</dbReference>
<dbReference type="GO" id="GO:0000049">
    <property type="term" value="F:tRNA binding"/>
    <property type="evidence" value="ECO:0007669"/>
    <property type="project" value="InterPro"/>
</dbReference>
<dbReference type="GO" id="GO:0008270">
    <property type="term" value="F:zinc ion binding"/>
    <property type="evidence" value="ECO:0007669"/>
    <property type="project" value="UniProtKB-UniRule"/>
</dbReference>
<dbReference type="GO" id="GO:0006428">
    <property type="term" value="P:isoleucyl-tRNA aminoacylation"/>
    <property type="evidence" value="ECO:0007669"/>
    <property type="project" value="UniProtKB-UniRule"/>
</dbReference>
<dbReference type="CDD" id="cd07960">
    <property type="entry name" value="Anticodon_Ia_Ile_BEm"/>
    <property type="match status" value="1"/>
</dbReference>
<dbReference type="CDD" id="cd00818">
    <property type="entry name" value="IleRS_core"/>
    <property type="match status" value="1"/>
</dbReference>
<dbReference type="FunFam" id="1.10.730.20:FF:000001">
    <property type="entry name" value="Isoleucine--tRNA ligase"/>
    <property type="match status" value="1"/>
</dbReference>
<dbReference type="FunFam" id="3.40.50.620:FF:000042">
    <property type="entry name" value="Isoleucine--tRNA ligase"/>
    <property type="match status" value="1"/>
</dbReference>
<dbReference type="FunFam" id="3.40.50.620:FF:000048">
    <property type="entry name" value="Isoleucine--tRNA ligase"/>
    <property type="match status" value="1"/>
</dbReference>
<dbReference type="FunFam" id="3.90.740.10:FF:000002">
    <property type="entry name" value="Isoleucine--tRNA ligase"/>
    <property type="match status" value="1"/>
</dbReference>
<dbReference type="Gene3D" id="1.10.730.20">
    <property type="match status" value="1"/>
</dbReference>
<dbReference type="Gene3D" id="3.40.50.620">
    <property type="entry name" value="HUPs"/>
    <property type="match status" value="2"/>
</dbReference>
<dbReference type="Gene3D" id="3.90.740.10">
    <property type="entry name" value="Valyl/Leucyl/Isoleucyl-tRNA synthetase, editing domain"/>
    <property type="match status" value="1"/>
</dbReference>
<dbReference type="HAMAP" id="MF_02002">
    <property type="entry name" value="Ile_tRNA_synth_type1"/>
    <property type="match status" value="1"/>
</dbReference>
<dbReference type="InterPro" id="IPR001412">
    <property type="entry name" value="aa-tRNA-synth_I_CS"/>
</dbReference>
<dbReference type="InterPro" id="IPR002300">
    <property type="entry name" value="aa-tRNA-synth_Ia"/>
</dbReference>
<dbReference type="InterPro" id="IPR033708">
    <property type="entry name" value="Anticodon_Ile_BEm"/>
</dbReference>
<dbReference type="InterPro" id="IPR002301">
    <property type="entry name" value="Ile-tRNA-ligase"/>
</dbReference>
<dbReference type="InterPro" id="IPR023585">
    <property type="entry name" value="Ile-tRNA-ligase_type1"/>
</dbReference>
<dbReference type="InterPro" id="IPR050081">
    <property type="entry name" value="Ile-tRNA_ligase"/>
</dbReference>
<dbReference type="InterPro" id="IPR013155">
    <property type="entry name" value="M/V/L/I-tRNA-synth_anticd-bd"/>
</dbReference>
<dbReference type="InterPro" id="IPR014729">
    <property type="entry name" value="Rossmann-like_a/b/a_fold"/>
</dbReference>
<dbReference type="InterPro" id="IPR009080">
    <property type="entry name" value="tRNAsynth_Ia_anticodon-bd"/>
</dbReference>
<dbReference type="InterPro" id="IPR009008">
    <property type="entry name" value="Val/Leu/Ile-tRNA-synth_edit"/>
</dbReference>
<dbReference type="InterPro" id="IPR010663">
    <property type="entry name" value="Znf_FPG/IleRS"/>
</dbReference>
<dbReference type="NCBIfam" id="TIGR00392">
    <property type="entry name" value="ileS"/>
    <property type="match status" value="1"/>
</dbReference>
<dbReference type="PANTHER" id="PTHR42765:SF1">
    <property type="entry name" value="ISOLEUCINE--TRNA LIGASE, MITOCHONDRIAL"/>
    <property type="match status" value="1"/>
</dbReference>
<dbReference type="PANTHER" id="PTHR42765">
    <property type="entry name" value="SOLEUCYL-TRNA SYNTHETASE"/>
    <property type="match status" value="1"/>
</dbReference>
<dbReference type="Pfam" id="PF08264">
    <property type="entry name" value="Anticodon_1"/>
    <property type="match status" value="1"/>
</dbReference>
<dbReference type="Pfam" id="PF00133">
    <property type="entry name" value="tRNA-synt_1"/>
    <property type="match status" value="1"/>
</dbReference>
<dbReference type="Pfam" id="PF06827">
    <property type="entry name" value="zf-FPG_IleRS"/>
    <property type="match status" value="1"/>
</dbReference>
<dbReference type="PRINTS" id="PR00984">
    <property type="entry name" value="TRNASYNTHILE"/>
</dbReference>
<dbReference type="SUPFAM" id="SSF47323">
    <property type="entry name" value="Anticodon-binding domain of a subclass of class I aminoacyl-tRNA synthetases"/>
    <property type="match status" value="1"/>
</dbReference>
<dbReference type="SUPFAM" id="SSF52374">
    <property type="entry name" value="Nucleotidylyl transferase"/>
    <property type="match status" value="1"/>
</dbReference>
<dbReference type="SUPFAM" id="SSF50677">
    <property type="entry name" value="ValRS/IleRS/LeuRS editing domain"/>
    <property type="match status" value="1"/>
</dbReference>
<dbReference type="PROSITE" id="PS00178">
    <property type="entry name" value="AA_TRNA_LIGASE_I"/>
    <property type="match status" value="1"/>
</dbReference>
<protein>
    <recommendedName>
        <fullName evidence="1">Isoleucine--tRNA ligase</fullName>
        <ecNumber evidence="1">6.1.1.5</ecNumber>
    </recommendedName>
    <alternativeName>
        <fullName evidence="1">Isoleucyl-tRNA synthetase</fullName>
        <shortName evidence="1">IleRS</shortName>
    </alternativeName>
</protein>
<gene>
    <name evidence="1" type="primary">ileS</name>
    <name type="ordered locus">SSPA0043</name>
</gene>